<gene>
    <name evidence="1" type="primary">lutA2</name>
    <name type="ordered locus">BA_3270</name>
    <name type="ordered locus">GBAA_3270</name>
    <name type="ordered locus">BAS3037</name>
</gene>
<organism>
    <name type="scientific">Bacillus anthracis</name>
    <dbReference type="NCBI Taxonomy" id="1392"/>
    <lineage>
        <taxon>Bacteria</taxon>
        <taxon>Bacillati</taxon>
        <taxon>Bacillota</taxon>
        <taxon>Bacilli</taxon>
        <taxon>Bacillales</taxon>
        <taxon>Bacillaceae</taxon>
        <taxon>Bacillus</taxon>
        <taxon>Bacillus cereus group</taxon>
    </lineage>
</organism>
<comment type="function">
    <text evidence="1">Is involved in L-lactate degradation and allows cells to grow with lactate as the sole carbon source.</text>
</comment>
<comment type="similarity">
    <text evidence="1">Belongs to the LutA/YkgE family.</text>
</comment>
<feature type="chain" id="PRO_0000384023" description="Lactate utilization protein A 2">
    <location>
        <begin position="1"/>
        <end position="242"/>
    </location>
</feature>
<proteinExistence type="inferred from homology"/>
<reference key="1">
    <citation type="journal article" date="2003" name="Nature">
        <title>The genome sequence of Bacillus anthracis Ames and comparison to closely related bacteria.</title>
        <authorList>
            <person name="Read T.D."/>
            <person name="Peterson S.N."/>
            <person name="Tourasse N.J."/>
            <person name="Baillie L.W."/>
            <person name="Paulsen I.T."/>
            <person name="Nelson K.E."/>
            <person name="Tettelin H."/>
            <person name="Fouts D.E."/>
            <person name="Eisen J.A."/>
            <person name="Gill S.R."/>
            <person name="Holtzapple E.K."/>
            <person name="Okstad O.A."/>
            <person name="Helgason E."/>
            <person name="Rilstone J."/>
            <person name="Wu M."/>
            <person name="Kolonay J.F."/>
            <person name="Beanan M.J."/>
            <person name="Dodson R.J."/>
            <person name="Brinkac L.M."/>
            <person name="Gwinn M.L."/>
            <person name="DeBoy R.T."/>
            <person name="Madpu R."/>
            <person name="Daugherty S.C."/>
            <person name="Durkin A.S."/>
            <person name="Haft D.H."/>
            <person name="Nelson W.C."/>
            <person name="Peterson J.D."/>
            <person name="Pop M."/>
            <person name="Khouri H.M."/>
            <person name="Radune D."/>
            <person name="Benton J.L."/>
            <person name="Mahamoud Y."/>
            <person name="Jiang L."/>
            <person name="Hance I.R."/>
            <person name="Weidman J.F."/>
            <person name="Berry K.J."/>
            <person name="Plaut R.D."/>
            <person name="Wolf A.M."/>
            <person name="Watkins K.L."/>
            <person name="Nierman W.C."/>
            <person name="Hazen A."/>
            <person name="Cline R.T."/>
            <person name="Redmond C."/>
            <person name="Thwaite J.E."/>
            <person name="White O."/>
            <person name="Salzberg S.L."/>
            <person name="Thomason B."/>
            <person name="Friedlander A.M."/>
            <person name="Koehler T.M."/>
            <person name="Hanna P.C."/>
            <person name="Kolstoe A.-B."/>
            <person name="Fraser C.M."/>
        </authorList>
    </citation>
    <scope>NUCLEOTIDE SEQUENCE [LARGE SCALE GENOMIC DNA]</scope>
    <source>
        <strain>Ames / isolate Porton</strain>
    </source>
</reference>
<reference key="2">
    <citation type="submission" date="2004-01" db="EMBL/GenBank/DDBJ databases">
        <title>Complete genome sequence of Bacillus anthracis Sterne.</title>
        <authorList>
            <person name="Brettin T.S."/>
            <person name="Bruce D."/>
            <person name="Challacombe J.F."/>
            <person name="Gilna P."/>
            <person name="Han C."/>
            <person name="Hill K."/>
            <person name="Hitchcock P."/>
            <person name="Jackson P."/>
            <person name="Keim P."/>
            <person name="Longmire J."/>
            <person name="Lucas S."/>
            <person name="Okinaka R."/>
            <person name="Richardson P."/>
            <person name="Rubin E."/>
            <person name="Tice H."/>
        </authorList>
    </citation>
    <scope>NUCLEOTIDE SEQUENCE [LARGE SCALE GENOMIC DNA]</scope>
    <source>
        <strain>Sterne</strain>
    </source>
</reference>
<reference key="3">
    <citation type="journal article" date="2009" name="J. Bacteriol.">
        <title>The complete genome sequence of Bacillus anthracis Ames 'Ancestor'.</title>
        <authorList>
            <person name="Ravel J."/>
            <person name="Jiang L."/>
            <person name="Stanley S.T."/>
            <person name="Wilson M.R."/>
            <person name="Decker R.S."/>
            <person name="Read T.D."/>
            <person name="Worsham P."/>
            <person name="Keim P.S."/>
            <person name="Salzberg S.L."/>
            <person name="Fraser-Liggett C.M."/>
            <person name="Rasko D.A."/>
        </authorList>
    </citation>
    <scope>NUCLEOTIDE SEQUENCE [LARGE SCALE GENOMIC DNA]</scope>
    <source>
        <strain>Ames ancestor</strain>
    </source>
</reference>
<protein>
    <recommendedName>
        <fullName evidence="1">Lactate utilization protein A 2</fullName>
    </recommendedName>
</protein>
<dbReference type="EMBL" id="AE016879">
    <property type="protein sequence ID" value="AAP27054.1"/>
    <property type="molecule type" value="Genomic_DNA"/>
</dbReference>
<dbReference type="EMBL" id="AE017334">
    <property type="protein sequence ID" value="AAT32382.1"/>
    <property type="molecule type" value="Genomic_DNA"/>
</dbReference>
<dbReference type="EMBL" id="AE017225">
    <property type="protein sequence ID" value="AAT55345.1"/>
    <property type="molecule type" value="Genomic_DNA"/>
</dbReference>
<dbReference type="RefSeq" id="NP_845568.1">
    <property type="nucleotide sequence ID" value="NC_003997.3"/>
</dbReference>
<dbReference type="RefSeq" id="WP_000868791.1">
    <property type="nucleotide sequence ID" value="NZ_WXXJ01000025.1"/>
</dbReference>
<dbReference type="RefSeq" id="YP_029294.1">
    <property type="nucleotide sequence ID" value="NC_005945.1"/>
</dbReference>
<dbReference type="SMR" id="Q81ND5"/>
<dbReference type="IntAct" id="Q81ND5">
    <property type="interactions" value="2"/>
</dbReference>
<dbReference type="STRING" id="261594.GBAA_3270"/>
<dbReference type="DNASU" id="1089085"/>
<dbReference type="GeneID" id="45023043"/>
<dbReference type="KEGG" id="ban:BA_3270"/>
<dbReference type="KEGG" id="bar:GBAA_3270"/>
<dbReference type="KEGG" id="bat:BAS3037"/>
<dbReference type="PATRIC" id="fig|198094.11.peg.3251"/>
<dbReference type="eggNOG" id="COG0247">
    <property type="taxonomic scope" value="Bacteria"/>
</dbReference>
<dbReference type="HOGENOM" id="CLU_023081_1_0_9"/>
<dbReference type="OMA" id="VSADCGC"/>
<dbReference type="OrthoDB" id="9770306at2"/>
<dbReference type="Proteomes" id="UP000000427">
    <property type="component" value="Chromosome"/>
</dbReference>
<dbReference type="Proteomes" id="UP000000594">
    <property type="component" value="Chromosome"/>
</dbReference>
<dbReference type="GO" id="GO:0005829">
    <property type="term" value="C:cytosol"/>
    <property type="evidence" value="ECO:0007669"/>
    <property type="project" value="TreeGrafter"/>
</dbReference>
<dbReference type="GO" id="GO:0016491">
    <property type="term" value="F:oxidoreductase activity"/>
    <property type="evidence" value="ECO:0007669"/>
    <property type="project" value="UniProtKB-ARBA"/>
</dbReference>
<dbReference type="GO" id="GO:0006089">
    <property type="term" value="P:lactate metabolic process"/>
    <property type="evidence" value="ECO:0007669"/>
    <property type="project" value="UniProtKB-UniRule"/>
</dbReference>
<dbReference type="HAMAP" id="MF_02105">
    <property type="entry name" value="LutA"/>
    <property type="match status" value="1"/>
</dbReference>
<dbReference type="InterPro" id="IPR004017">
    <property type="entry name" value="Cys_rich_dom"/>
</dbReference>
<dbReference type="InterPro" id="IPR022822">
    <property type="entry name" value="LutA"/>
</dbReference>
<dbReference type="PANTHER" id="PTHR30296:SF0">
    <property type="entry name" value="LACTATE UTILIZATION PROTEIN A"/>
    <property type="match status" value="1"/>
</dbReference>
<dbReference type="PANTHER" id="PTHR30296">
    <property type="entry name" value="UNCHARACTERIZED PROTEIN YKGE"/>
    <property type="match status" value="1"/>
</dbReference>
<dbReference type="Pfam" id="PF02754">
    <property type="entry name" value="CCG"/>
    <property type="match status" value="2"/>
</dbReference>
<name>LUTA2_BACAN</name>
<evidence type="ECO:0000255" key="1">
    <source>
        <dbReference type="HAMAP-Rule" id="MF_02105"/>
    </source>
</evidence>
<sequence length="242" mass="27046">MKVSLFITCLSDVFFPQVGKSVVEIMNQCGVELDFPEGQTCCGQPAYNSGYQEDAKLAAKQMIKAFEHSEYIVTPSGSCASMVHHYYKEMFKGDSEWYEKAVHLADRTYELTDFVVNILGKNDWKSKLVEKAVFHQSCHMSRALGIKEEPLKLLSQVEGLDIKELPYCQDCCGFGGTFAVKMSSISETMVDEKIKHIEATEANLLIGADMGCLMNIGGRLRRENKNIQVLHVAEVLAKGLNK</sequence>
<keyword id="KW-1185">Reference proteome</keyword>
<accession>Q81ND5</accession>
<accession>Q6HWJ4</accession>
<accession>Q6KQP1</accession>